<gene>
    <name evidence="1" type="primary">recA</name>
    <name type="ordered locus">SERP0852</name>
</gene>
<sequence>MDNERQKALDTVIKNMEKSFGKGAVMKLGDNKGRRVSSTSSGSVTVDNALGVGGYPKGRIIEIYGPESSGKTTVALHAIAEVQKNGGVAAFIDAEHALDPVYAQALGVDIDNLYLSQPDHGEQGLEIAEAFVRSGAVDIVVVDSVAALTPKAEIEGEMGDTHVGLQARLMSQALRKLSGAISKSNTTAIFINQIREKVGVMFGNPETTPGGRALKFYSSVRLEVRRAEQLKQGQDIVGNRTKIKVVKNKVAPPFRVAEVDIMYGQGISKEGELIDLGVENDIVDKSGAWYSYNGDRMGQGKENVKNYLKENPQIKEEIDRKLREKLGIFDGDVDENENEDDSPKTLFDE</sequence>
<comment type="function">
    <text evidence="1">Can catalyze the hydrolysis of ATP in the presence of single-stranded DNA, the ATP-dependent uptake of single-stranded DNA by duplex DNA, and the ATP-dependent hybridization of homologous single-stranded DNAs. It interacts with LexA causing its activation and leading to its autocatalytic cleavage.</text>
</comment>
<comment type="subcellular location">
    <subcellularLocation>
        <location evidence="1">Cytoplasm</location>
    </subcellularLocation>
</comment>
<comment type="similarity">
    <text evidence="1">Belongs to the RecA family.</text>
</comment>
<protein>
    <recommendedName>
        <fullName evidence="1">Protein RecA</fullName>
    </recommendedName>
    <alternativeName>
        <fullName evidence="1">Recombinase A</fullName>
    </alternativeName>
</protein>
<feature type="chain" id="PRO_0000122846" description="Protein RecA">
    <location>
        <begin position="1"/>
        <end position="349"/>
    </location>
</feature>
<feature type="region of interest" description="Disordered" evidence="2">
    <location>
        <begin position="329"/>
        <end position="349"/>
    </location>
</feature>
<feature type="compositionally biased region" description="Acidic residues" evidence="2">
    <location>
        <begin position="331"/>
        <end position="340"/>
    </location>
</feature>
<feature type="binding site" evidence="1">
    <location>
        <begin position="65"/>
        <end position="72"/>
    </location>
    <ligand>
        <name>ATP</name>
        <dbReference type="ChEBI" id="CHEBI:30616"/>
    </ligand>
</feature>
<dbReference type="EMBL" id="CP000029">
    <property type="protein sequence ID" value="AAW54236.1"/>
    <property type="molecule type" value="Genomic_DNA"/>
</dbReference>
<dbReference type="RefSeq" id="WP_002439552.1">
    <property type="nucleotide sequence ID" value="NC_002976.3"/>
</dbReference>
<dbReference type="SMR" id="Q5HPQ6"/>
<dbReference type="STRING" id="176279.SERP0852"/>
<dbReference type="GeneID" id="50018903"/>
<dbReference type="KEGG" id="ser:SERP0852"/>
<dbReference type="eggNOG" id="COG0468">
    <property type="taxonomic scope" value="Bacteria"/>
</dbReference>
<dbReference type="HOGENOM" id="CLU_040469_3_2_9"/>
<dbReference type="Proteomes" id="UP000000531">
    <property type="component" value="Chromosome"/>
</dbReference>
<dbReference type="GO" id="GO:0005829">
    <property type="term" value="C:cytosol"/>
    <property type="evidence" value="ECO:0007669"/>
    <property type="project" value="TreeGrafter"/>
</dbReference>
<dbReference type="GO" id="GO:0005524">
    <property type="term" value="F:ATP binding"/>
    <property type="evidence" value="ECO:0007669"/>
    <property type="project" value="UniProtKB-UniRule"/>
</dbReference>
<dbReference type="GO" id="GO:0016887">
    <property type="term" value="F:ATP hydrolysis activity"/>
    <property type="evidence" value="ECO:0007669"/>
    <property type="project" value="InterPro"/>
</dbReference>
<dbReference type="GO" id="GO:0140664">
    <property type="term" value="F:ATP-dependent DNA damage sensor activity"/>
    <property type="evidence" value="ECO:0007669"/>
    <property type="project" value="InterPro"/>
</dbReference>
<dbReference type="GO" id="GO:0003684">
    <property type="term" value="F:damaged DNA binding"/>
    <property type="evidence" value="ECO:0007669"/>
    <property type="project" value="UniProtKB-UniRule"/>
</dbReference>
<dbReference type="GO" id="GO:0003697">
    <property type="term" value="F:single-stranded DNA binding"/>
    <property type="evidence" value="ECO:0007669"/>
    <property type="project" value="UniProtKB-UniRule"/>
</dbReference>
<dbReference type="GO" id="GO:0006310">
    <property type="term" value="P:DNA recombination"/>
    <property type="evidence" value="ECO:0007669"/>
    <property type="project" value="UniProtKB-UniRule"/>
</dbReference>
<dbReference type="GO" id="GO:0006281">
    <property type="term" value="P:DNA repair"/>
    <property type="evidence" value="ECO:0007669"/>
    <property type="project" value="UniProtKB-UniRule"/>
</dbReference>
<dbReference type="GO" id="GO:0009432">
    <property type="term" value="P:SOS response"/>
    <property type="evidence" value="ECO:0007669"/>
    <property type="project" value="UniProtKB-UniRule"/>
</dbReference>
<dbReference type="CDD" id="cd00983">
    <property type="entry name" value="RecA"/>
    <property type="match status" value="1"/>
</dbReference>
<dbReference type="FunFam" id="3.40.50.300:FF:000087">
    <property type="entry name" value="Recombinase RecA"/>
    <property type="match status" value="1"/>
</dbReference>
<dbReference type="Gene3D" id="3.40.50.300">
    <property type="entry name" value="P-loop containing nucleotide triphosphate hydrolases"/>
    <property type="match status" value="1"/>
</dbReference>
<dbReference type="HAMAP" id="MF_00268">
    <property type="entry name" value="RecA"/>
    <property type="match status" value="1"/>
</dbReference>
<dbReference type="InterPro" id="IPR003593">
    <property type="entry name" value="AAA+_ATPase"/>
</dbReference>
<dbReference type="InterPro" id="IPR013765">
    <property type="entry name" value="DNA_recomb/repair_RecA"/>
</dbReference>
<dbReference type="InterPro" id="IPR020584">
    <property type="entry name" value="DNA_recomb/repair_RecA_CS"/>
</dbReference>
<dbReference type="InterPro" id="IPR027417">
    <property type="entry name" value="P-loop_NTPase"/>
</dbReference>
<dbReference type="InterPro" id="IPR049261">
    <property type="entry name" value="RecA-like_C"/>
</dbReference>
<dbReference type="InterPro" id="IPR049428">
    <property type="entry name" value="RecA-like_N"/>
</dbReference>
<dbReference type="InterPro" id="IPR020588">
    <property type="entry name" value="RecA_ATP-bd"/>
</dbReference>
<dbReference type="InterPro" id="IPR023400">
    <property type="entry name" value="RecA_C_sf"/>
</dbReference>
<dbReference type="InterPro" id="IPR020587">
    <property type="entry name" value="RecA_monomer-monomer_interface"/>
</dbReference>
<dbReference type="NCBIfam" id="TIGR02012">
    <property type="entry name" value="tigrfam_recA"/>
    <property type="match status" value="1"/>
</dbReference>
<dbReference type="PANTHER" id="PTHR45900:SF1">
    <property type="entry name" value="MITOCHONDRIAL DNA REPAIR PROTEIN RECA HOMOLOG-RELATED"/>
    <property type="match status" value="1"/>
</dbReference>
<dbReference type="PANTHER" id="PTHR45900">
    <property type="entry name" value="RECA"/>
    <property type="match status" value="1"/>
</dbReference>
<dbReference type="Pfam" id="PF00154">
    <property type="entry name" value="RecA"/>
    <property type="match status" value="1"/>
</dbReference>
<dbReference type="Pfam" id="PF21096">
    <property type="entry name" value="RecA_C"/>
    <property type="match status" value="1"/>
</dbReference>
<dbReference type="PRINTS" id="PR00142">
    <property type="entry name" value="RECA"/>
</dbReference>
<dbReference type="SMART" id="SM00382">
    <property type="entry name" value="AAA"/>
    <property type="match status" value="1"/>
</dbReference>
<dbReference type="SUPFAM" id="SSF52540">
    <property type="entry name" value="P-loop containing nucleoside triphosphate hydrolases"/>
    <property type="match status" value="1"/>
</dbReference>
<dbReference type="SUPFAM" id="SSF54752">
    <property type="entry name" value="RecA protein, C-terminal domain"/>
    <property type="match status" value="1"/>
</dbReference>
<dbReference type="PROSITE" id="PS00321">
    <property type="entry name" value="RECA_1"/>
    <property type="match status" value="1"/>
</dbReference>
<dbReference type="PROSITE" id="PS50162">
    <property type="entry name" value="RECA_2"/>
    <property type="match status" value="1"/>
</dbReference>
<dbReference type="PROSITE" id="PS50163">
    <property type="entry name" value="RECA_3"/>
    <property type="match status" value="1"/>
</dbReference>
<reference key="1">
    <citation type="journal article" date="2005" name="J. Bacteriol.">
        <title>Insights on evolution of virulence and resistance from the complete genome analysis of an early methicillin-resistant Staphylococcus aureus strain and a biofilm-producing methicillin-resistant Staphylococcus epidermidis strain.</title>
        <authorList>
            <person name="Gill S.R."/>
            <person name="Fouts D.E."/>
            <person name="Archer G.L."/>
            <person name="Mongodin E.F."/>
            <person name="DeBoy R.T."/>
            <person name="Ravel J."/>
            <person name="Paulsen I.T."/>
            <person name="Kolonay J.F."/>
            <person name="Brinkac L.M."/>
            <person name="Beanan M.J."/>
            <person name="Dodson R.J."/>
            <person name="Daugherty S.C."/>
            <person name="Madupu R."/>
            <person name="Angiuoli S.V."/>
            <person name="Durkin A.S."/>
            <person name="Haft D.H."/>
            <person name="Vamathevan J.J."/>
            <person name="Khouri H."/>
            <person name="Utterback T.R."/>
            <person name="Lee C."/>
            <person name="Dimitrov G."/>
            <person name="Jiang L."/>
            <person name="Qin H."/>
            <person name="Weidman J."/>
            <person name="Tran K."/>
            <person name="Kang K.H."/>
            <person name="Hance I.R."/>
            <person name="Nelson K.E."/>
            <person name="Fraser C.M."/>
        </authorList>
    </citation>
    <scope>NUCLEOTIDE SEQUENCE [LARGE SCALE GENOMIC DNA]</scope>
    <source>
        <strain>ATCC 35984 / DSM 28319 / BCRC 17069 / CCUG 31568 / BM 3577 / RP62A</strain>
    </source>
</reference>
<evidence type="ECO:0000255" key="1">
    <source>
        <dbReference type="HAMAP-Rule" id="MF_00268"/>
    </source>
</evidence>
<evidence type="ECO:0000256" key="2">
    <source>
        <dbReference type="SAM" id="MobiDB-lite"/>
    </source>
</evidence>
<name>RECA_STAEQ</name>
<proteinExistence type="inferred from homology"/>
<organism>
    <name type="scientific">Staphylococcus epidermidis (strain ATCC 35984 / DSM 28319 / BCRC 17069 / CCUG 31568 / BM 3577 / RP62A)</name>
    <dbReference type="NCBI Taxonomy" id="176279"/>
    <lineage>
        <taxon>Bacteria</taxon>
        <taxon>Bacillati</taxon>
        <taxon>Bacillota</taxon>
        <taxon>Bacilli</taxon>
        <taxon>Bacillales</taxon>
        <taxon>Staphylococcaceae</taxon>
        <taxon>Staphylococcus</taxon>
    </lineage>
</organism>
<keyword id="KW-0067">ATP-binding</keyword>
<keyword id="KW-0963">Cytoplasm</keyword>
<keyword id="KW-0227">DNA damage</keyword>
<keyword id="KW-0233">DNA recombination</keyword>
<keyword id="KW-0234">DNA repair</keyword>
<keyword id="KW-0238">DNA-binding</keyword>
<keyword id="KW-0547">Nucleotide-binding</keyword>
<keyword id="KW-1185">Reference proteome</keyword>
<keyword id="KW-0742">SOS response</keyword>
<accession>Q5HPQ6</accession>